<accession>Q2YC56</accession>
<sequence length="288" mass="30691">MSAKIIDGKRLSQEVRAECRARAARLAEKGTQPGLAVVIVGDNPASRVYVRNKAKACGETGIYSEVHEFPENANQDEVIGRIQELNGNPGIHGILVQLPLPRHFDSSRVTESVAVEKDVDGFHLYNVGALVTGSSIFPPCTPNGVMKMLEKYDIPIEGQHAVIVGRSNIVGKPMALMLLQKGATVTICTSRTRNLAEHTSRADILIVAAGKPRLITAMMVKPGATVIDVGINRLSDGKLAGDVDFESVKEKAGYITPVPGGVGPMTIAMLLCNTVVAAEQAHARLQGN</sequence>
<protein>
    <recommendedName>
        <fullName evidence="1">Bifunctional protein FolD</fullName>
    </recommendedName>
    <domain>
        <recommendedName>
            <fullName evidence="1">Methylenetetrahydrofolate dehydrogenase</fullName>
            <ecNumber evidence="1">1.5.1.5</ecNumber>
        </recommendedName>
    </domain>
    <domain>
        <recommendedName>
            <fullName evidence="1">Methenyltetrahydrofolate cyclohydrolase</fullName>
            <ecNumber evidence="1">3.5.4.9</ecNumber>
        </recommendedName>
    </domain>
</protein>
<dbReference type="EC" id="1.5.1.5" evidence="1"/>
<dbReference type="EC" id="3.5.4.9" evidence="1"/>
<dbReference type="EMBL" id="CP000103">
    <property type="protein sequence ID" value="ABB73665.1"/>
    <property type="molecule type" value="Genomic_DNA"/>
</dbReference>
<dbReference type="RefSeq" id="WP_011379719.1">
    <property type="nucleotide sequence ID" value="NC_007614.1"/>
</dbReference>
<dbReference type="SMR" id="Q2YC56"/>
<dbReference type="STRING" id="323848.Nmul_A0357"/>
<dbReference type="KEGG" id="nmu:Nmul_A0357"/>
<dbReference type="eggNOG" id="COG0190">
    <property type="taxonomic scope" value="Bacteria"/>
</dbReference>
<dbReference type="HOGENOM" id="CLU_034045_2_1_4"/>
<dbReference type="OrthoDB" id="9803580at2"/>
<dbReference type="UniPathway" id="UPA00193"/>
<dbReference type="Proteomes" id="UP000002718">
    <property type="component" value="Chromosome"/>
</dbReference>
<dbReference type="GO" id="GO:0005829">
    <property type="term" value="C:cytosol"/>
    <property type="evidence" value="ECO:0007669"/>
    <property type="project" value="TreeGrafter"/>
</dbReference>
<dbReference type="GO" id="GO:0004477">
    <property type="term" value="F:methenyltetrahydrofolate cyclohydrolase activity"/>
    <property type="evidence" value="ECO:0007669"/>
    <property type="project" value="UniProtKB-UniRule"/>
</dbReference>
<dbReference type="GO" id="GO:0004488">
    <property type="term" value="F:methylenetetrahydrofolate dehydrogenase (NADP+) activity"/>
    <property type="evidence" value="ECO:0007669"/>
    <property type="project" value="UniProtKB-UniRule"/>
</dbReference>
<dbReference type="GO" id="GO:0000105">
    <property type="term" value="P:L-histidine biosynthetic process"/>
    <property type="evidence" value="ECO:0007669"/>
    <property type="project" value="UniProtKB-KW"/>
</dbReference>
<dbReference type="GO" id="GO:0009086">
    <property type="term" value="P:methionine biosynthetic process"/>
    <property type="evidence" value="ECO:0007669"/>
    <property type="project" value="UniProtKB-KW"/>
</dbReference>
<dbReference type="GO" id="GO:0006164">
    <property type="term" value="P:purine nucleotide biosynthetic process"/>
    <property type="evidence" value="ECO:0007669"/>
    <property type="project" value="UniProtKB-KW"/>
</dbReference>
<dbReference type="GO" id="GO:0035999">
    <property type="term" value="P:tetrahydrofolate interconversion"/>
    <property type="evidence" value="ECO:0007669"/>
    <property type="project" value="UniProtKB-UniRule"/>
</dbReference>
<dbReference type="CDD" id="cd01080">
    <property type="entry name" value="NAD_bind_m-THF_DH_Cyclohyd"/>
    <property type="match status" value="1"/>
</dbReference>
<dbReference type="FunFam" id="3.40.50.720:FF:000094">
    <property type="entry name" value="Bifunctional protein FolD"/>
    <property type="match status" value="1"/>
</dbReference>
<dbReference type="FunFam" id="3.40.50.10860:FF:000005">
    <property type="entry name" value="C-1-tetrahydrofolate synthase, cytoplasmic, putative"/>
    <property type="match status" value="1"/>
</dbReference>
<dbReference type="Gene3D" id="3.40.50.10860">
    <property type="entry name" value="Leucine Dehydrogenase, chain A, domain 1"/>
    <property type="match status" value="1"/>
</dbReference>
<dbReference type="Gene3D" id="3.40.50.720">
    <property type="entry name" value="NAD(P)-binding Rossmann-like Domain"/>
    <property type="match status" value="1"/>
</dbReference>
<dbReference type="HAMAP" id="MF_01576">
    <property type="entry name" value="THF_DHG_CYH"/>
    <property type="match status" value="1"/>
</dbReference>
<dbReference type="InterPro" id="IPR046346">
    <property type="entry name" value="Aminoacid_DH-like_N_sf"/>
</dbReference>
<dbReference type="InterPro" id="IPR036291">
    <property type="entry name" value="NAD(P)-bd_dom_sf"/>
</dbReference>
<dbReference type="InterPro" id="IPR000672">
    <property type="entry name" value="THF_DH/CycHdrlase"/>
</dbReference>
<dbReference type="InterPro" id="IPR020630">
    <property type="entry name" value="THF_DH/CycHdrlase_cat_dom"/>
</dbReference>
<dbReference type="InterPro" id="IPR020867">
    <property type="entry name" value="THF_DH/CycHdrlase_CS"/>
</dbReference>
<dbReference type="InterPro" id="IPR020631">
    <property type="entry name" value="THF_DH/CycHdrlase_NAD-bd_dom"/>
</dbReference>
<dbReference type="NCBIfam" id="NF008058">
    <property type="entry name" value="PRK10792.1"/>
    <property type="match status" value="1"/>
</dbReference>
<dbReference type="NCBIfam" id="NF010783">
    <property type="entry name" value="PRK14186.1"/>
    <property type="match status" value="1"/>
</dbReference>
<dbReference type="NCBIfam" id="NF010786">
    <property type="entry name" value="PRK14189.1"/>
    <property type="match status" value="1"/>
</dbReference>
<dbReference type="PANTHER" id="PTHR48099:SF5">
    <property type="entry name" value="C-1-TETRAHYDROFOLATE SYNTHASE, CYTOPLASMIC"/>
    <property type="match status" value="1"/>
</dbReference>
<dbReference type="PANTHER" id="PTHR48099">
    <property type="entry name" value="C-1-TETRAHYDROFOLATE SYNTHASE, CYTOPLASMIC-RELATED"/>
    <property type="match status" value="1"/>
</dbReference>
<dbReference type="Pfam" id="PF00763">
    <property type="entry name" value="THF_DHG_CYH"/>
    <property type="match status" value="1"/>
</dbReference>
<dbReference type="Pfam" id="PF02882">
    <property type="entry name" value="THF_DHG_CYH_C"/>
    <property type="match status" value="1"/>
</dbReference>
<dbReference type="PRINTS" id="PR00085">
    <property type="entry name" value="THFDHDRGNASE"/>
</dbReference>
<dbReference type="SUPFAM" id="SSF53223">
    <property type="entry name" value="Aminoacid dehydrogenase-like, N-terminal domain"/>
    <property type="match status" value="1"/>
</dbReference>
<dbReference type="SUPFAM" id="SSF51735">
    <property type="entry name" value="NAD(P)-binding Rossmann-fold domains"/>
    <property type="match status" value="1"/>
</dbReference>
<dbReference type="PROSITE" id="PS00766">
    <property type="entry name" value="THF_DHG_CYH_1"/>
    <property type="match status" value="1"/>
</dbReference>
<dbReference type="PROSITE" id="PS00767">
    <property type="entry name" value="THF_DHG_CYH_2"/>
    <property type="match status" value="1"/>
</dbReference>
<gene>
    <name evidence="1" type="primary">folD</name>
    <name type="ordered locus">Nmul_A0357</name>
</gene>
<feature type="chain" id="PRO_0000268422" description="Bifunctional protein FolD">
    <location>
        <begin position="1"/>
        <end position="288"/>
    </location>
</feature>
<feature type="binding site" evidence="1">
    <location>
        <begin position="165"/>
        <end position="167"/>
    </location>
    <ligand>
        <name>NADP(+)</name>
        <dbReference type="ChEBI" id="CHEBI:58349"/>
    </ligand>
</feature>
<feature type="binding site" evidence="1">
    <location>
        <position position="190"/>
    </location>
    <ligand>
        <name>NADP(+)</name>
        <dbReference type="ChEBI" id="CHEBI:58349"/>
    </ligand>
</feature>
<feature type="binding site" evidence="1">
    <location>
        <position position="231"/>
    </location>
    <ligand>
        <name>NADP(+)</name>
        <dbReference type="ChEBI" id="CHEBI:58349"/>
    </ligand>
</feature>
<evidence type="ECO:0000255" key="1">
    <source>
        <dbReference type="HAMAP-Rule" id="MF_01576"/>
    </source>
</evidence>
<organism>
    <name type="scientific">Nitrosospira multiformis (strain ATCC 25196 / NCIMB 11849 / C 71)</name>
    <dbReference type="NCBI Taxonomy" id="323848"/>
    <lineage>
        <taxon>Bacteria</taxon>
        <taxon>Pseudomonadati</taxon>
        <taxon>Pseudomonadota</taxon>
        <taxon>Betaproteobacteria</taxon>
        <taxon>Nitrosomonadales</taxon>
        <taxon>Nitrosomonadaceae</taxon>
        <taxon>Nitrosospira</taxon>
    </lineage>
</organism>
<reference key="1">
    <citation type="submission" date="2005-08" db="EMBL/GenBank/DDBJ databases">
        <title>Complete sequence of chromosome 1 of Nitrosospira multiformis ATCC 25196.</title>
        <authorList>
            <person name="Copeland A."/>
            <person name="Lucas S."/>
            <person name="Lapidus A."/>
            <person name="Barry K."/>
            <person name="Detter J.C."/>
            <person name="Glavina T."/>
            <person name="Hammon N."/>
            <person name="Israni S."/>
            <person name="Pitluck S."/>
            <person name="Chain P."/>
            <person name="Malfatti S."/>
            <person name="Shin M."/>
            <person name="Vergez L."/>
            <person name="Schmutz J."/>
            <person name="Larimer F."/>
            <person name="Land M."/>
            <person name="Hauser L."/>
            <person name="Kyrpides N."/>
            <person name="Lykidis A."/>
            <person name="Richardson P."/>
        </authorList>
    </citation>
    <scope>NUCLEOTIDE SEQUENCE [LARGE SCALE GENOMIC DNA]</scope>
    <source>
        <strain>ATCC 25196 / NCIMB 11849 / C 71</strain>
    </source>
</reference>
<proteinExistence type="inferred from homology"/>
<name>FOLD_NITMU</name>
<keyword id="KW-0028">Amino-acid biosynthesis</keyword>
<keyword id="KW-0368">Histidine biosynthesis</keyword>
<keyword id="KW-0378">Hydrolase</keyword>
<keyword id="KW-0486">Methionine biosynthesis</keyword>
<keyword id="KW-0511">Multifunctional enzyme</keyword>
<keyword id="KW-0521">NADP</keyword>
<keyword id="KW-0554">One-carbon metabolism</keyword>
<keyword id="KW-0560">Oxidoreductase</keyword>
<keyword id="KW-0658">Purine biosynthesis</keyword>
<keyword id="KW-1185">Reference proteome</keyword>
<comment type="function">
    <text evidence="1">Catalyzes the oxidation of 5,10-methylenetetrahydrofolate to 5,10-methenyltetrahydrofolate and then the hydrolysis of 5,10-methenyltetrahydrofolate to 10-formyltetrahydrofolate.</text>
</comment>
<comment type="catalytic activity">
    <reaction evidence="1">
        <text>(6R)-5,10-methylene-5,6,7,8-tetrahydrofolate + NADP(+) = (6R)-5,10-methenyltetrahydrofolate + NADPH</text>
        <dbReference type="Rhea" id="RHEA:22812"/>
        <dbReference type="ChEBI" id="CHEBI:15636"/>
        <dbReference type="ChEBI" id="CHEBI:57455"/>
        <dbReference type="ChEBI" id="CHEBI:57783"/>
        <dbReference type="ChEBI" id="CHEBI:58349"/>
        <dbReference type="EC" id="1.5.1.5"/>
    </reaction>
</comment>
<comment type="catalytic activity">
    <reaction evidence="1">
        <text>(6R)-5,10-methenyltetrahydrofolate + H2O = (6R)-10-formyltetrahydrofolate + H(+)</text>
        <dbReference type="Rhea" id="RHEA:23700"/>
        <dbReference type="ChEBI" id="CHEBI:15377"/>
        <dbReference type="ChEBI" id="CHEBI:15378"/>
        <dbReference type="ChEBI" id="CHEBI:57455"/>
        <dbReference type="ChEBI" id="CHEBI:195366"/>
        <dbReference type="EC" id="3.5.4.9"/>
    </reaction>
</comment>
<comment type="pathway">
    <text evidence="1">One-carbon metabolism; tetrahydrofolate interconversion.</text>
</comment>
<comment type="subunit">
    <text evidence="1">Homodimer.</text>
</comment>
<comment type="similarity">
    <text evidence="1">Belongs to the tetrahydrofolate dehydrogenase/cyclohydrolase family.</text>
</comment>